<organism>
    <name type="scientific">Chlamydia abortus (strain DSM 27085 / S26/3)</name>
    <name type="common">Chlamydophila abortus</name>
    <dbReference type="NCBI Taxonomy" id="218497"/>
    <lineage>
        <taxon>Bacteria</taxon>
        <taxon>Pseudomonadati</taxon>
        <taxon>Chlamydiota</taxon>
        <taxon>Chlamydiia</taxon>
        <taxon>Chlamydiales</taxon>
        <taxon>Chlamydiaceae</taxon>
        <taxon>Chlamydia/Chlamydophila group</taxon>
        <taxon>Chlamydia</taxon>
    </lineage>
</organism>
<proteinExistence type="inferred from homology"/>
<feature type="chain" id="PRO_0000258656" description="Large ribosomal subunit protein bL35">
    <location>
        <begin position="1"/>
        <end position="64"/>
    </location>
</feature>
<feature type="region of interest" description="Disordered" evidence="2">
    <location>
        <begin position="1"/>
        <end position="56"/>
    </location>
</feature>
<feature type="compositionally biased region" description="Basic residues" evidence="2">
    <location>
        <begin position="23"/>
        <end position="35"/>
    </location>
</feature>
<sequence>MPKMKSNKSVAARFKLTGSGQLKRTRPGKRHKLSKKSSQEKRNLSKQPLVDKGQVGMYKRMMLV</sequence>
<name>RL35_CHLAB</name>
<gene>
    <name evidence="1" type="primary">rpmI</name>
    <name type="ordered locus">CAB738</name>
</gene>
<protein>
    <recommendedName>
        <fullName evidence="1">Large ribosomal subunit protein bL35</fullName>
    </recommendedName>
    <alternativeName>
        <fullName evidence="3">50S ribosomal protein L35</fullName>
    </alternativeName>
</protein>
<keyword id="KW-0687">Ribonucleoprotein</keyword>
<keyword id="KW-0689">Ribosomal protein</keyword>
<reference key="1">
    <citation type="journal article" date="2005" name="Genome Res.">
        <title>The Chlamydophila abortus genome sequence reveals an array of variable proteins that contribute to interspecies variation.</title>
        <authorList>
            <person name="Thomson N.R."/>
            <person name="Yeats C."/>
            <person name="Bell K."/>
            <person name="Holden M.T.G."/>
            <person name="Bentley S.D."/>
            <person name="Livingstone M."/>
            <person name="Cerdeno-Tarraga A.-M."/>
            <person name="Harris B."/>
            <person name="Doggett J."/>
            <person name="Ormond D."/>
            <person name="Mungall K."/>
            <person name="Clarke K."/>
            <person name="Feltwell T."/>
            <person name="Hance Z."/>
            <person name="Sanders M."/>
            <person name="Quail M.A."/>
            <person name="Price C."/>
            <person name="Barrell B.G."/>
            <person name="Parkhill J."/>
            <person name="Longbottom D."/>
        </authorList>
    </citation>
    <scope>NUCLEOTIDE SEQUENCE [LARGE SCALE GENOMIC DNA]</scope>
    <source>
        <strain>DSM 27085 / S26/3</strain>
    </source>
</reference>
<dbReference type="EMBL" id="CR848038">
    <property type="protein sequence ID" value="CAH64185.1"/>
    <property type="molecule type" value="Genomic_DNA"/>
</dbReference>
<dbReference type="RefSeq" id="WP_011006725.1">
    <property type="nucleotide sequence ID" value="NC_004552.2"/>
</dbReference>
<dbReference type="SMR" id="Q5L5A6"/>
<dbReference type="GeneID" id="93024293"/>
<dbReference type="KEGG" id="cab:CAB738"/>
<dbReference type="eggNOG" id="COG0291">
    <property type="taxonomic scope" value="Bacteria"/>
</dbReference>
<dbReference type="HOGENOM" id="CLU_169643_3_0_0"/>
<dbReference type="OrthoDB" id="47476at2"/>
<dbReference type="Proteomes" id="UP000001012">
    <property type="component" value="Chromosome"/>
</dbReference>
<dbReference type="GO" id="GO:0022625">
    <property type="term" value="C:cytosolic large ribosomal subunit"/>
    <property type="evidence" value="ECO:0007669"/>
    <property type="project" value="TreeGrafter"/>
</dbReference>
<dbReference type="GO" id="GO:0003735">
    <property type="term" value="F:structural constituent of ribosome"/>
    <property type="evidence" value="ECO:0007669"/>
    <property type="project" value="InterPro"/>
</dbReference>
<dbReference type="GO" id="GO:0006412">
    <property type="term" value="P:translation"/>
    <property type="evidence" value="ECO:0007669"/>
    <property type="project" value="UniProtKB-UniRule"/>
</dbReference>
<dbReference type="FunFam" id="4.10.410.60:FF:000001">
    <property type="entry name" value="50S ribosomal protein L35"/>
    <property type="match status" value="1"/>
</dbReference>
<dbReference type="Gene3D" id="4.10.410.60">
    <property type="match status" value="1"/>
</dbReference>
<dbReference type="HAMAP" id="MF_00514">
    <property type="entry name" value="Ribosomal_bL35"/>
    <property type="match status" value="1"/>
</dbReference>
<dbReference type="InterPro" id="IPR001706">
    <property type="entry name" value="Ribosomal_bL35"/>
</dbReference>
<dbReference type="InterPro" id="IPR021137">
    <property type="entry name" value="Ribosomal_bL35-like"/>
</dbReference>
<dbReference type="InterPro" id="IPR018265">
    <property type="entry name" value="Ribosomal_bL35_CS"/>
</dbReference>
<dbReference type="InterPro" id="IPR037229">
    <property type="entry name" value="Ribosomal_bL35_sf"/>
</dbReference>
<dbReference type="NCBIfam" id="TIGR00001">
    <property type="entry name" value="rpmI_bact"/>
    <property type="match status" value="1"/>
</dbReference>
<dbReference type="PANTHER" id="PTHR33343">
    <property type="entry name" value="54S RIBOSOMAL PROTEIN BL35M"/>
    <property type="match status" value="1"/>
</dbReference>
<dbReference type="PANTHER" id="PTHR33343:SF1">
    <property type="entry name" value="LARGE RIBOSOMAL SUBUNIT PROTEIN BL35M"/>
    <property type="match status" value="1"/>
</dbReference>
<dbReference type="Pfam" id="PF01632">
    <property type="entry name" value="Ribosomal_L35p"/>
    <property type="match status" value="1"/>
</dbReference>
<dbReference type="PRINTS" id="PR00064">
    <property type="entry name" value="RIBOSOMALL35"/>
</dbReference>
<dbReference type="SUPFAM" id="SSF143034">
    <property type="entry name" value="L35p-like"/>
    <property type="match status" value="1"/>
</dbReference>
<dbReference type="PROSITE" id="PS00936">
    <property type="entry name" value="RIBOSOMAL_L35"/>
    <property type="match status" value="1"/>
</dbReference>
<accession>Q5L5A6</accession>
<evidence type="ECO:0000255" key="1">
    <source>
        <dbReference type="HAMAP-Rule" id="MF_00514"/>
    </source>
</evidence>
<evidence type="ECO:0000256" key="2">
    <source>
        <dbReference type="SAM" id="MobiDB-lite"/>
    </source>
</evidence>
<evidence type="ECO:0000305" key="3"/>
<comment type="similarity">
    <text evidence="1">Belongs to the bacterial ribosomal protein bL35 family.</text>
</comment>